<sequence length="302" mass="34810">MYWFKNAMIYKLTKELDWSEDKLQQNLAQCAYHPCGQSDMSKFGWTTPLRGAELFCFSVGKQILLVAHKEEKIIPAHVIKRELDNRINELEEKENRKLKKTEKQALKDDVVSVLLPRAFSKNQQTAIWIDTEKNLIYVDAASSKRAEDVLALLRKSLGSLPVVPLAFANEPSMVMTDWIIKNDMPQWLVPLEEAELKAADDRGIIRCKNQALDSEEMISHLQAGKFVTKLALEWEEHLTFVLNDDGTLKRLKFADMIREKNDDILKEDFAQRFDADFILMTGELAKLTENLIEHFGGEKNRL</sequence>
<reference key="1">
    <citation type="journal article" date="2004" name="Nat. Biotechnol.">
        <title>The genome sequence of the capnophilic rumen bacterium Mannheimia succiniciproducens.</title>
        <authorList>
            <person name="Hong S.H."/>
            <person name="Kim J.S."/>
            <person name="Lee S.Y."/>
            <person name="In Y.H."/>
            <person name="Choi S.S."/>
            <person name="Rih J.-K."/>
            <person name="Kim C.H."/>
            <person name="Jeong H."/>
            <person name="Hur C.G."/>
            <person name="Kim J.J."/>
        </authorList>
    </citation>
    <scope>NUCLEOTIDE SEQUENCE [LARGE SCALE GENOMIC DNA]</scope>
    <source>
        <strain>KCTC 0769BP / MBEL55E</strain>
    </source>
</reference>
<comment type="function">
    <text evidence="1">May be involved in recombination.</text>
</comment>
<comment type="subcellular location">
    <subcellularLocation>
        <location evidence="1">Cytoplasm</location>
        <location evidence="1">Nucleoid</location>
    </subcellularLocation>
</comment>
<comment type="similarity">
    <text evidence="1">Belongs to the RdgC family.</text>
</comment>
<keyword id="KW-0963">Cytoplasm</keyword>
<keyword id="KW-0233">DNA recombination</keyword>
<organism>
    <name type="scientific">Mannheimia succiniciproducens (strain KCTC 0769BP / MBEL55E)</name>
    <dbReference type="NCBI Taxonomy" id="221988"/>
    <lineage>
        <taxon>Bacteria</taxon>
        <taxon>Pseudomonadati</taxon>
        <taxon>Pseudomonadota</taxon>
        <taxon>Gammaproteobacteria</taxon>
        <taxon>Pasteurellales</taxon>
        <taxon>Pasteurellaceae</taxon>
        <taxon>Basfia</taxon>
    </lineage>
</organism>
<evidence type="ECO:0000255" key="1">
    <source>
        <dbReference type="HAMAP-Rule" id="MF_00194"/>
    </source>
</evidence>
<gene>
    <name evidence="1" type="primary">rdgC</name>
    <name type="ordered locus">MS1800</name>
</gene>
<feature type="chain" id="PRO_1000021212" description="Recombination-associated protein RdgC">
    <location>
        <begin position="1"/>
        <end position="302"/>
    </location>
</feature>
<name>RDGC_MANSM</name>
<dbReference type="EMBL" id="AE016827">
    <property type="protein sequence ID" value="AAU38407.1"/>
    <property type="molecule type" value="Genomic_DNA"/>
</dbReference>
<dbReference type="RefSeq" id="WP_011200965.1">
    <property type="nucleotide sequence ID" value="NC_006300.1"/>
</dbReference>
<dbReference type="SMR" id="Q65RK3"/>
<dbReference type="STRING" id="221988.MS1800"/>
<dbReference type="KEGG" id="msu:MS1800"/>
<dbReference type="eggNOG" id="COG2974">
    <property type="taxonomic scope" value="Bacteria"/>
</dbReference>
<dbReference type="HOGENOM" id="CLU_052038_1_1_6"/>
<dbReference type="OrthoDB" id="5290530at2"/>
<dbReference type="Proteomes" id="UP000000607">
    <property type="component" value="Chromosome"/>
</dbReference>
<dbReference type="GO" id="GO:0043590">
    <property type="term" value="C:bacterial nucleoid"/>
    <property type="evidence" value="ECO:0007669"/>
    <property type="project" value="TreeGrafter"/>
</dbReference>
<dbReference type="GO" id="GO:0005737">
    <property type="term" value="C:cytoplasm"/>
    <property type="evidence" value="ECO:0007669"/>
    <property type="project" value="UniProtKB-UniRule"/>
</dbReference>
<dbReference type="GO" id="GO:0003690">
    <property type="term" value="F:double-stranded DNA binding"/>
    <property type="evidence" value="ECO:0007669"/>
    <property type="project" value="TreeGrafter"/>
</dbReference>
<dbReference type="GO" id="GO:0006310">
    <property type="term" value="P:DNA recombination"/>
    <property type="evidence" value="ECO:0007669"/>
    <property type="project" value="UniProtKB-UniRule"/>
</dbReference>
<dbReference type="GO" id="GO:0000018">
    <property type="term" value="P:regulation of DNA recombination"/>
    <property type="evidence" value="ECO:0007669"/>
    <property type="project" value="TreeGrafter"/>
</dbReference>
<dbReference type="HAMAP" id="MF_00194">
    <property type="entry name" value="RdgC"/>
    <property type="match status" value="1"/>
</dbReference>
<dbReference type="InterPro" id="IPR007476">
    <property type="entry name" value="RdgC"/>
</dbReference>
<dbReference type="NCBIfam" id="NF001462">
    <property type="entry name" value="PRK00321.1-3"/>
    <property type="match status" value="1"/>
</dbReference>
<dbReference type="NCBIfam" id="NF001464">
    <property type="entry name" value="PRK00321.1-5"/>
    <property type="match status" value="1"/>
</dbReference>
<dbReference type="PANTHER" id="PTHR38103">
    <property type="entry name" value="RECOMBINATION-ASSOCIATED PROTEIN RDGC"/>
    <property type="match status" value="1"/>
</dbReference>
<dbReference type="PANTHER" id="PTHR38103:SF1">
    <property type="entry name" value="RECOMBINATION-ASSOCIATED PROTEIN RDGC"/>
    <property type="match status" value="1"/>
</dbReference>
<dbReference type="Pfam" id="PF04381">
    <property type="entry name" value="RdgC"/>
    <property type="match status" value="1"/>
</dbReference>
<protein>
    <recommendedName>
        <fullName evidence="1">Recombination-associated protein RdgC</fullName>
    </recommendedName>
</protein>
<accession>Q65RK3</accession>
<proteinExistence type="inferred from homology"/>